<keyword id="KW-0378">Hydrolase</keyword>
<keyword id="KW-0479">Metal-binding</keyword>
<keyword id="KW-0823">Tryptophan catabolism</keyword>
<keyword id="KW-0862">Zinc</keyword>
<name>KYNB_BACCN</name>
<protein>
    <recommendedName>
        <fullName evidence="1">Kynurenine formamidase</fullName>
        <shortName evidence="1">KFA</shortName>
        <shortName evidence="1">KFase</shortName>
        <ecNumber evidence="1">3.5.1.9</ecNumber>
    </recommendedName>
    <alternativeName>
        <fullName evidence="1">Arylformamidase</fullName>
    </alternativeName>
    <alternativeName>
        <fullName evidence="1">N-formylkynurenine formamidase</fullName>
        <shortName evidence="1">FKF</shortName>
    </alternativeName>
</protein>
<gene>
    <name evidence="1" type="primary">kynB</name>
    <name type="ordered locus">Bcer98_1902</name>
</gene>
<organism>
    <name type="scientific">Bacillus cytotoxicus (strain DSM 22905 / CIP 110041 / 391-98 / NVH 391-98)</name>
    <dbReference type="NCBI Taxonomy" id="315749"/>
    <lineage>
        <taxon>Bacteria</taxon>
        <taxon>Bacillati</taxon>
        <taxon>Bacillota</taxon>
        <taxon>Bacilli</taxon>
        <taxon>Bacillales</taxon>
        <taxon>Bacillaceae</taxon>
        <taxon>Bacillus</taxon>
        <taxon>Bacillus cereus group</taxon>
    </lineage>
</organism>
<feature type="chain" id="PRO_0000362090" description="Kynurenine formamidase">
    <location>
        <begin position="1"/>
        <end position="209"/>
    </location>
</feature>
<feature type="active site" description="Proton donor/acceptor" evidence="1">
    <location>
        <position position="60"/>
    </location>
</feature>
<feature type="binding site" evidence="1">
    <location>
        <position position="20"/>
    </location>
    <ligand>
        <name>substrate</name>
    </ligand>
</feature>
<feature type="binding site" evidence="1">
    <location>
        <position position="50"/>
    </location>
    <ligand>
        <name>Zn(2+)</name>
        <dbReference type="ChEBI" id="CHEBI:29105"/>
        <label>1</label>
    </ligand>
</feature>
<feature type="binding site" evidence="1">
    <location>
        <position position="54"/>
    </location>
    <ligand>
        <name>Zn(2+)</name>
        <dbReference type="ChEBI" id="CHEBI:29105"/>
        <label>1</label>
    </ligand>
</feature>
<feature type="binding site" evidence="1">
    <location>
        <position position="56"/>
    </location>
    <ligand>
        <name>Zn(2+)</name>
        <dbReference type="ChEBI" id="CHEBI:29105"/>
        <label>1</label>
    </ligand>
</feature>
<feature type="binding site" evidence="1">
    <location>
        <position position="56"/>
    </location>
    <ligand>
        <name>Zn(2+)</name>
        <dbReference type="ChEBI" id="CHEBI:29105"/>
        <label>2</label>
    </ligand>
</feature>
<feature type="binding site" evidence="1">
    <location>
        <position position="161"/>
    </location>
    <ligand>
        <name>Zn(2+)</name>
        <dbReference type="ChEBI" id="CHEBI:29105"/>
        <label>2</label>
    </ligand>
</feature>
<feature type="binding site" evidence="1">
    <location>
        <position position="173"/>
    </location>
    <ligand>
        <name>Zn(2+)</name>
        <dbReference type="ChEBI" id="CHEBI:29105"/>
        <label>1</label>
    </ligand>
</feature>
<feature type="binding site" evidence="1">
    <location>
        <position position="173"/>
    </location>
    <ligand>
        <name>Zn(2+)</name>
        <dbReference type="ChEBI" id="CHEBI:29105"/>
        <label>2</label>
    </ligand>
</feature>
<evidence type="ECO:0000255" key="1">
    <source>
        <dbReference type="HAMAP-Rule" id="MF_01969"/>
    </source>
</evidence>
<accession>A7GPY2</accession>
<sequence length="209" mass="23004">MKASEWIDISQPLNNEIATWPGDTPFSYEVSCTKEQSGSVNIGKVTMSIHTGTHIDAPFHFDNDGKKVIDLDIHVYVGPARIIDVSSMDSIGVKELQQFNLEGVERLLLRTSSHGNAQKFPDIIPFLCAEIAPFLSKKGVRLIGVDVPSVDPLDDKELAAHHQLFQHGIHILENVVLDHVQDGDYELIALPLALTEADGSPVRAIIRPL</sequence>
<comment type="function">
    <text evidence="1">Catalyzes the hydrolysis of N-formyl-L-kynurenine to L-kynurenine, the second step in the kynurenine pathway of tryptophan degradation.</text>
</comment>
<comment type="catalytic activity">
    <reaction evidence="1">
        <text>N-formyl-L-kynurenine + H2O = L-kynurenine + formate + H(+)</text>
        <dbReference type="Rhea" id="RHEA:13009"/>
        <dbReference type="ChEBI" id="CHEBI:15377"/>
        <dbReference type="ChEBI" id="CHEBI:15378"/>
        <dbReference type="ChEBI" id="CHEBI:15740"/>
        <dbReference type="ChEBI" id="CHEBI:57959"/>
        <dbReference type="ChEBI" id="CHEBI:58629"/>
        <dbReference type="EC" id="3.5.1.9"/>
    </reaction>
</comment>
<comment type="cofactor">
    <cofactor evidence="1">
        <name>Zn(2+)</name>
        <dbReference type="ChEBI" id="CHEBI:29105"/>
    </cofactor>
    <text evidence="1">Binds 2 zinc ions per subunit.</text>
</comment>
<comment type="pathway">
    <text evidence="1">Amino-acid degradation; L-tryptophan degradation via kynurenine pathway; L-kynurenine from L-tryptophan: step 2/2.</text>
</comment>
<comment type="subunit">
    <text evidence="1">Homodimer.</text>
</comment>
<comment type="similarity">
    <text evidence="1">Belongs to the Cyclase 1 superfamily. KynB family.</text>
</comment>
<proteinExistence type="inferred from homology"/>
<dbReference type="EC" id="3.5.1.9" evidence="1"/>
<dbReference type="EMBL" id="CP000764">
    <property type="protein sequence ID" value="ABS22190.1"/>
    <property type="molecule type" value="Genomic_DNA"/>
</dbReference>
<dbReference type="RefSeq" id="WP_012094383.1">
    <property type="nucleotide sequence ID" value="NC_009674.1"/>
</dbReference>
<dbReference type="SMR" id="A7GPY2"/>
<dbReference type="STRING" id="315749.Bcer98_1902"/>
<dbReference type="GeneID" id="33897211"/>
<dbReference type="KEGG" id="bcy:Bcer98_1902"/>
<dbReference type="eggNOG" id="COG1878">
    <property type="taxonomic scope" value="Bacteria"/>
</dbReference>
<dbReference type="HOGENOM" id="CLU_030671_3_1_9"/>
<dbReference type="OrthoDB" id="9796085at2"/>
<dbReference type="UniPathway" id="UPA00333">
    <property type="reaction ID" value="UER00454"/>
</dbReference>
<dbReference type="Proteomes" id="UP000002300">
    <property type="component" value="Chromosome"/>
</dbReference>
<dbReference type="GO" id="GO:0004061">
    <property type="term" value="F:arylformamidase activity"/>
    <property type="evidence" value="ECO:0000250"/>
    <property type="project" value="UniProtKB"/>
</dbReference>
<dbReference type="GO" id="GO:0004328">
    <property type="term" value="F:formamidase activity"/>
    <property type="evidence" value="ECO:0007669"/>
    <property type="project" value="InterPro"/>
</dbReference>
<dbReference type="GO" id="GO:0008270">
    <property type="term" value="F:zinc ion binding"/>
    <property type="evidence" value="ECO:0007669"/>
    <property type="project" value="UniProtKB-UniRule"/>
</dbReference>
<dbReference type="GO" id="GO:0043420">
    <property type="term" value="P:anthranilate metabolic process"/>
    <property type="evidence" value="ECO:0000250"/>
    <property type="project" value="UniProtKB"/>
</dbReference>
<dbReference type="GO" id="GO:0019441">
    <property type="term" value="P:L-tryptophan catabolic process to kynurenine"/>
    <property type="evidence" value="ECO:0000250"/>
    <property type="project" value="UniProtKB"/>
</dbReference>
<dbReference type="FunFam" id="3.50.30.50:FF:000001">
    <property type="entry name" value="Kynurenine formamidase"/>
    <property type="match status" value="1"/>
</dbReference>
<dbReference type="Gene3D" id="3.50.30.50">
    <property type="entry name" value="Putative cyclase"/>
    <property type="match status" value="1"/>
</dbReference>
<dbReference type="HAMAP" id="MF_01969">
    <property type="entry name" value="KynB"/>
    <property type="match status" value="1"/>
</dbReference>
<dbReference type="InterPro" id="IPR007325">
    <property type="entry name" value="KFase/CYL"/>
</dbReference>
<dbReference type="InterPro" id="IPR037175">
    <property type="entry name" value="KFase_sf"/>
</dbReference>
<dbReference type="InterPro" id="IPR017484">
    <property type="entry name" value="Kynurenine_formamidase_bac"/>
</dbReference>
<dbReference type="NCBIfam" id="TIGR03035">
    <property type="entry name" value="trp_arylform"/>
    <property type="match status" value="1"/>
</dbReference>
<dbReference type="PANTHER" id="PTHR31118">
    <property type="entry name" value="CYCLASE-LIKE PROTEIN 2"/>
    <property type="match status" value="1"/>
</dbReference>
<dbReference type="PANTHER" id="PTHR31118:SF32">
    <property type="entry name" value="KYNURENINE FORMAMIDASE"/>
    <property type="match status" value="1"/>
</dbReference>
<dbReference type="Pfam" id="PF04199">
    <property type="entry name" value="Cyclase"/>
    <property type="match status" value="1"/>
</dbReference>
<dbReference type="SUPFAM" id="SSF102198">
    <property type="entry name" value="Putative cyclase"/>
    <property type="match status" value="1"/>
</dbReference>
<reference key="1">
    <citation type="journal article" date="2008" name="Chem. Biol. Interact.">
        <title>Extending the Bacillus cereus group genomics to putative food-borne pathogens of different toxicity.</title>
        <authorList>
            <person name="Lapidus A."/>
            <person name="Goltsman E."/>
            <person name="Auger S."/>
            <person name="Galleron N."/>
            <person name="Segurens B."/>
            <person name="Dossat C."/>
            <person name="Land M.L."/>
            <person name="Broussolle V."/>
            <person name="Brillard J."/>
            <person name="Guinebretiere M.-H."/>
            <person name="Sanchis V."/>
            <person name="Nguen-the C."/>
            <person name="Lereclus D."/>
            <person name="Richardson P."/>
            <person name="Wincker P."/>
            <person name="Weissenbach J."/>
            <person name="Ehrlich S.D."/>
            <person name="Sorokin A."/>
        </authorList>
    </citation>
    <scope>NUCLEOTIDE SEQUENCE [LARGE SCALE GENOMIC DNA]</scope>
    <source>
        <strain>DSM 22905 / CIP 110041 / 391-98 / NVH 391-98</strain>
    </source>
</reference>